<dbReference type="EC" id="6.1.1.19" evidence="1"/>
<dbReference type="EMBL" id="AE014295">
    <property type="protein sequence ID" value="AAN25073.1"/>
    <property type="molecule type" value="Genomic_DNA"/>
</dbReference>
<dbReference type="RefSeq" id="NP_696437.1">
    <property type="nucleotide sequence ID" value="NC_004307.2"/>
</dbReference>
<dbReference type="RefSeq" id="WP_011068711.1">
    <property type="nucleotide sequence ID" value="NC_004307.2"/>
</dbReference>
<dbReference type="SMR" id="Q8G4V2"/>
<dbReference type="STRING" id="206672.BL1272"/>
<dbReference type="EnsemblBacteria" id="AAN25073">
    <property type="protein sequence ID" value="AAN25073"/>
    <property type="gene ID" value="BL1272"/>
</dbReference>
<dbReference type="KEGG" id="blo:BL1272"/>
<dbReference type="PATRIC" id="fig|206672.9.peg.1559"/>
<dbReference type="HOGENOM" id="CLU_006406_0_1_11"/>
<dbReference type="OrthoDB" id="9803211at2"/>
<dbReference type="PhylomeDB" id="Q8G4V2"/>
<dbReference type="Proteomes" id="UP000000439">
    <property type="component" value="Chromosome"/>
</dbReference>
<dbReference type="GO" id="GO:0005737">
    <property type="term" value="C:cytoplasm"/>
    <property type="evidence" value="ECO:0007669"/>
    <property type="project" value="UniProtKB-SubCell"/>
</dbReference>
<dbReference type="GO" id="GO:0004814">
    <property type="term" value="F:arginine-tRNA ligase activity"/>
    <property type="evidence" value="ECO:0007669"/>
    <property type="project" value="UniProtKB-UniRule"/>
</dbReference>
<dbReference type="GO" id="GO:0005524">
    <property type="term" value="F:ATP binding"/>
    <property type="evidence" value="ECO:0007669"/>
    <property type="project" value="UniProtKB-UniRule"/>
</dbReference>
<dbReference type="GO" id="GO:0006420">
    <property type="term" value="P:arginyl-tRNA aminoacylation"/>
    <property type="evidence" value="ECO:0007669"/>
    <property type="project" value="UniProtKB-UniRule"/>
</dbReference>
<dbReference type="CDD" id="cd00671">
    <property type="entry name" value="ArgRS_core"/>
    <property type="match status" value="1"/>
</dbReference>
<dbReference type="FunFam" id="3.40.50.620:FF:000062">
    <property type="entry name" value="Arginine--tRNA ligase"/>
    <property type="match status" value="1"/>
</dbReference>
<dbReference type="Gene3D" id="3.30.1360.70">
    <property type="entry name" value="Arginyl tRNA synthetase N-terminal domain"/>
    <property type="match status" value="1"/>
</dbReference>
<dbReference type="Gene3D" id="3.40.50.620">
    <property type="entry name" value="HUPs"/>
    <property type="match status" value="1"/>
</dbReference>
<dbReference type="Gene3D" id="1.10.730.10">
    <property type="entry name" value="Isoleucyl-tRNA Synthetase, Domain 1"/>
    <property type="match status" value="1"/>
</dbReference>
<dbReference type="HAMAP" id="MF_00123">
    <property type="entry name" value="Arg_tRNA_synth"/>
    <property type="match status" value="1"/>
</dbReference>
<dbReference type="InterPro" id="IPR001412">
    <property type="entry name" value="aa-tRNA-synth_I_CS"/>
</dbReference>
<dbReference type="InterPro" id="IPR001278">
    <property type="entry name" value="Arg-tRNA-ligase"/>
</dbReference>
<dbReference type="InterPro" id="IPR005148">
    <property type="entry name" value="Arg-tRNA-synth_N"/>
</dbReference>
<dbReference type="InterPro" id="IPR036695">
    <property type="entry name" value="Arg-tRNA-synth_N_sf"/>
</dbReference>
<dbReference type="InterPro" id="IPR035684">
    <property type="entry name" value="ArgRS_core"/>
</dbReference>
<dbReference type="InterPro" id="IPR008909">
    <property type="entry name" value="DALR_anticod-bd"/>
</dbReference>
<dbReference type="InterPro" id="IPR014729">
    <property type="entry name" value="Rossmann-like_a/b/a_fold"/>
</dbReference>
<dbReference type="InterPro" id="IPR009080">
    <property type="entry name" value="tRNAsynth_Ia_anticodon-bd"/>
</dbReference>
<dbReference type="NCBIfam" id="TIGR00456">
    <property type="entry name" value="argS"/>
    <property type="match status" value="1"/>
</dbReference>
<dbReference type="PANTHER" id="PTHR11956:SF5">
    <property type="entry name" value="ARGININE--TRNA LIGASE, CYTOPLASMIC"/>
    <property type="match status" value="1"/>
</dbReference>
<dbReference type="PANTHER" id="PTHR11956">
    <property type="entry name" value="ARGINYL-TRNA SYNTHETASE"/>
    <property type="match status" value="1"/>
</dbReference>
<dbReference type="Pfam" id="PF03485">
    <property type="entry name" value="Arg_tRNA_synt_N"/>
    <property type="match status" value="1"/>
</dbReference>
<dbReference type="Pfam" id="PF05746">
    <property type="entry name" value="DALR_1"/>
    <property type="match status" value="1"/>
</dbReference>
<dbReference type="Pfam" id="PF00750">
    <property type="entry name" value="tRNA-synt_1d"/>
    <property type="match status" value="1"/>
</dbReference>
<dbReference type="PRINTS" id="PR01038">
    <property type="entry name" value="TRNASYNTHARG"/>
</dbReference>
<dbReference type="SMART" id="SM01016">
    <property type="entry name" value="Arg_tRNA_synt_N"/>
    <property type="match status" value="1"/>
</dbReference>
<dbReference type="SMART" id="SM00836">
    <property type="entry name" value="DALR_1"/>
    <property type="match status" value="1"/>
</dbReference>
<dbReference type="SUPFAM" id="SSF47323">
    <property type="entry name" value="Anticodon-binding domain of a subclass of class I aminoacyl-tRNA synthetases"/>
    <property type="match status" value="1"/>
</dbReference>
<dbReference type="SUPFAM" id="SSF55190">
    <property type="entry name" value="Arginyl-tRNA synthetase (ArgRS), N-terminal 'additional' domain"/>
    <property type="match status" value="1"/>
</dbReference>
<dbReference type="SUPFAM" id="SSF52374">
    <property type="entry name" value="Nucleotidylyl transferase"/>
    <property type="match status" value="1"/>
</dbReference>
<dbReference type="PROSITE" id="PS00178">
    <property type="entry name" value="AA_TRNA_LIGASE_I"/>
    <property type="match status" value="1"/>
</dbReference>
<evidence type="ECO:0000255" key="1">
    <source>
        <dbReference type="HAMAP-Rule" id="MF_00123"/>
    </source>
</evidence>
<proteinExistence type="inferred from homology"/>
<gene>
    <name evidence="1" type="primary">argS</name>
    <name type="ordered locus">BL1272</name>
</gene>
<reference key="1">
    <citation type="journal article" date="2002" name="Proc. Natl. Acad. Sci. U.S.A.">
        <title>The genome sequence of Bifidobacterium longum reflects its adaptation to the human gastrointestinal tract.</title>
        <authorList>
            <person name="Schell M.A."/>
            <person name="Karmirantzou M."/>
            <person name="Snel B."/>
            <person name="Vilanova D."/>
            <person name="Berger B."/>
            <person name="Pessi G."/>
            <person name="Zwahlen M.-C."/>
            <person name="Desiere F."/>
            <person name="Bork P."/>
            <person name="Delley M."/>
            <person name="Pridmore R.D."/>
            <person name="Arigoni F."/>
        </authorList>
    </citation>
    <scope>NUCLEOTIDE SEQUENCE [LARGE SCALE GENOMIC DNA]</scope>
    <source>
        <strain>NCC 2705</strain>
    </source>
</reference>
<feature type="chain" id="PRO_0000151532" description="Arginine--tRNA ligase">
    <location>
        <begin position="1"/>
        <end position="620"/>
    </location>
</feature>
<feature type="short sequence motif" description="'HIGH' region">
    <location>
        <begin position="147"/>
        <end position="157"/>
    </location>
</feature>
<name>SYR_BIFLO</name>
<accession>Q8G4V2</accession>
<keyword id="KW-0030">Aminoacyl-tRNA synthetase</keyword>
<keyword id="KW-0067">ATP-binding</keyword>
<keyword id="KW-0963">Cytoplasm</keyword>
<keyword id="KW-0436">Ligase</keyword>
<keyword id="KW-0547">Nucleotide-binding</keyword>
<keyword id="KW-0648">Protein biosynthesis</keyword>
<keyword id="KW-1185">Reference proteome</keyword>
<sequence length="620" mass="67206">MSPEALSELISSIAHNLVAAGQAGALTDELIPPVDKLAVMRPKDRAHGDWASNIAMQLAKKAGMKPRDLAEPFAAALAEADGIAKVEVAGPGFINITLDSASAAAVVDAVLAAGAVTDADKHLNKVNEYGRNDHLGGQTLNLEFVSANPTGPIHIGGTRWAAVGDAMARVLEANGAKVVREYYFNDHGEQINRFAKSLVAAWAEANNLGEAGYQTETPCDGYKGAYINEIAARVQAEAESDGVDLTALAHQDQGLNDDGEPLGEADTEVREEFRKRAVPMMFDEIQKSMKDFRVNFDVWFHENSLYADGKVDAAIEELKSRGDIFDKDGATWFESTKHGDDKDRVIIKSNGEFAYFAADIAYYWDKRHRAENSADVAIYMLGADHHGYIGRMMAMCAAFGDEPGKNMQILIGQLVNVMKDGKPVRMSKRAGNVVTIDDLVSVVGVDAARYSLARSDYNQNFDIDLALLASHTNDNPVYYVQYAHARSKNVDRNAAAAGISYEGADLALLDTEADGEVLAALAQFPSVLATAADDRQPHKVARYLEELAATYHKWYNVERVVPMALTDPETRGDDEARKALEIAKNPEPARAAARLKLNDAVQQVIANGLDLLGVTAPEKM</sequence>
<protein>
    <recommendedName>
        <fullName evidence="1">Arginine--tRNA ligase</fullName>
        <ecNumber evidence="1">6.1.1.19</ecNumber>
    </recommendedName>
    <alternativeName>
        <fullName evidence="1">Arginyl-tRNA synthetase</fullName>
        <shortName evidence="1">ArgRS</shortName>
    </alternativeName>
</protein>
<comment type="catalytic activity">
    <reaction evidence="1">
        <text>tRNA(Arg) + L-arginine + ATP = L-arginyl-tRNA(Arg) + AMP + diphosphate</text>
        <dbReference type="Rhea" id="RHEA:20301"/>
        <dbReference type="Rhea" id="RHEA-COMP:9658"/>
        <dbReference type="Rhea" id="RHEA-COMP:9673"/>
        <dbReference type="ChEBI" id="CHEBI:30616"/>
        <dbReference type="ChEBI" id="CHEBI:32682"/>
        <dbReference type="ChEBI" id="CHEBI:33019"/>
        <dbReference type="ChEBI" id="CHEBI:78442"/>
        <dbReference type="ChEBI" id="CHEBI:78513"/>
        <dbReference type="ChEBI" id="CHEBI:456215"/>
        <dbReference type="EC" id="6.1.1.19"/>
    </reaction>
</comment>
<comment type="subunit">
    <text evidence="1">Monomer.</text>
</comment>
<comment type="subcellular location">
    <subcellularLocation>
        <location evidence="1">Cytoplasm</location>
    </subcellularLocation>
</comment>
<comment type="similarity">
    <text evidence="1">Belongs to the class-I aminoacyl-tRNA synthetase family.</text>
</comment>
<organism>
    <name type="scientific">Bifidobacterium longum (strain NCC 2705)</name>
    <dbReference type="NCBI Taxonomy" id="206672"/>
    <lineage>
        <taxon>Bacteria</taxon>
        <taxon>Bacillati</taxon>
        <taxon>Actinomycetota</taxon>
        <taxon>Actinomycetes</taxon>
        <taxon>Bifidobacteriales</taxon>
        <taxon>Bifidobacteriaceae</taxon>
        <taxon>Bifidobacterium</taxon>
    </lineage>
</organism>